<sequence>MQSSVTEFLIPRLVNIEQISMTHVKITLEPLERGFGHTLGNALRRILLSSMPGFAVTEVEIDGILHEYSTKEGVQEDIIEILLNLKGLAIRVYGKDQVYLTLVKTGIGVVTAADINHGNDVEIINLDHIICTLTCKNASISMRIKVQCGRGYVPVISRTNVISDNKENYVGKLLVDACYSPVERMIYKVEAARVEKRTDLDKLVIEMETNGTLDPEEAIRRAATILSNQLESFVYLRDIREPEIKEEKPEFDPILLRPVDDLELTVRSANCLKAEMIHYIGDLVQKTEVELLRTPNLGKKSLTEIKDVLAAKNLSLGMNLENWPPDNILDN</sequence>
<comment type="function">
    <text evidence="1">DNA-dependent RNA polymerase catalyzes the transcription of DNA into RNA using the four ribonucleoside triphosphates as substrates.</text>
</comment>
<comment type="catalytic activity">
    <reaction evidence="1">
        <text>RNA(n) + a ribonucleoside 5'-triphosphate = RNA(n+1) + diphosphate</text>
        <dbReference type="Rhea" id="RHEA:21248"/>
        <dbReference type="Rhea" id="RHEA-COMP:14527"/>
        <dbReference type="Rhea" id="RHEA-COMP:17342"/>
        <dbReference type="ChEBI" id="CHEBI:33019"/>
        <dbReference type="ChEBI" id="CHEBI:61557"/>
        <dbReference type="ChEBI" id="CHEBI:140395"/>
        <dbReference type="EC" id="2.7.7.6"/>
    </reaction>
</comment>
<comment type="subunit">
    <text evidence="1">Homodimer. The RNAP catalytic core consists of 2 alpha, 1 beta, 1 beta' and 1 omega subunit. When a sigma factor is associated with the core the holoenzyme is formed, which can initiate transcription.</text>
</comment>
<comment type="domain">
    <text evidence="1">The N-terminal domain is essential for RNAP assembly and basal transcription, whereas the C-terminal domain is involved in interaction with transcriptional regulators and with upstream promoter elements.</text>
</comment>
<comment type="similarity">
    <text evidence="1">Belongs to the RNA polymerase alpha chain family.</text>
</comment>
<dbReference type="EC" id="2.7.7.6" evidence="1"/>
<dbReference type="EMBL" id="AE016826">
    <property type="protein sequence ID" value="AAO27148.1"/>
    <property type="molecule type" value="Genomic_DNA"/>
</dbReference>
<dbReference type="RefSeq" id="WP_011091549.1">
    <property type="nucleotide sequence ID" value="NC_004545.1"/>
</dbReference>
<dbReference type="SMR" id="P59455"/>
<dbReference type="STRING" id="224915.bbp_442"/>
<dbReference type="KEGG" id="bab:bbp_442"/>
<dbReference type="eggNOG" id="COG0202">
    <property type="taxonomic scope" value="Bacteria"/>
</dbReference>
<dbReference type="HOGENOM" id="CLU_053084_0_0_6"/>
<dbReference type="OrthoDB" id="9805706at2"/>
<dbReference type="Proteomes" id="UP000000601">
    <property type="component" value="Chromosome"/>
</dbReference>
<dbReference type="GO" id="GO:0005737">
    <property type="term" value="C:cytoplasm"/>
    <property type="evidence" value="ECO:0007669"/>
    <property type="project" value="UniProtKB-ARBA"/>
</dbReference>
<dbReference type="GO" id="GO:0000428">
    <property type="term" value="C:DNA-directed RNA polymerase complex"/>
    <property type="evidence" value="ECO:0007669"/>
    <property type="project" value="UniProtKB-KW"/>
</dbReference>
<dbReference type="GO" id="GO:0003677">
    <property type="term" value="F:DNA binding"/>
    <property type="evidence" value="ECO:0007669"/>
    <property type="project" value="UniProtKB-UniRule"/>
</dbReference>
<dbReference type="GO" id="GO:0003899">
    <property type="term" value="F:DNA-directed RNA polymerase activity"/>
    <property type="evidence" value="ECO:0007669"/>
    <property type="project" value="UniProtKB-UniRule"/>
</dbReference>
<dbReference type="GO" id="GO:0046983">
    <property type="term" value="F:protein dimerization activity"/>
    <property type="evidence" value="ECO:0007669"/>
    <property type="project" value="InterPro"/>
</dbReference>
<dbReference type="GO" id="GO:0006351">
    <property type="term" value="P:DNA-templated transcription"/>
    <property type="evidence" value="ECO:0007669"/>
    <property type="project" value="UniProtKB-UniRule"/>
</dbReference>
<dbReference type="CDD" id="cd06928">
    <property type="entry name" value="RNAP_alpha_NTD"/>
    <property type="match status" value="1"/>
</dbReference>
<dbReference type="FunFam" id="1.10.150.20:FF:000001">
    <property type="entry name" value="DNA-directed RNA polymerase subunit alpha"/>
    <property type="match status" value="1"/>
</dbReference>
<dbReference type="FunFam" id="2.170.120.12:FF:000001">
    <property type="entry name" value="DNA-directed RNA polymerase subunit alpha"/>
    <property type="match status" value="1"/>
</dbReference>
<dbReference type="Gene3D" id="1.10.150.20">
    <property type="entry name" value="5' to 3' exonuclease, C-terminal subdomain"/>
    <property type="match status" value="1"/>
</dbReference>
<dbReference type="Gene3D" id="2.170.120.12">
    <property type="entry name" value="DNA-directed RNA polymerase, insert domain"/>
    <property type="match status" value="1"/>
</dbReference>
<dbReference type="Gene3D" id="3.30.1360.10">
    <property type="entry name" value="RNA polymerase, RBP11-like subunit"/>
    <property type="match status" value="1"/>
</dbReference>
<dbReference type="HAMAP" id="MF_00059">
    <property type="entry name" value="RNApol_bact_RpoA"/>
    <property type="match status" value="1"/>
</dbReference>
<dbReference type="InterPro" id="IPR011262">
    <property type="entry name" value="DNA-dir_RNA_pol_insert"/>
</dbReference>
<dbReference type="InterPro" id="IPR011263">
    <property type="entry name" value="DNA-dir_RNA_pol_RpoA/D/Rpb3"/>
</dbReference>
<dbReference type="InterPro" id="IPR011773">
    <property type="entry name" value="DNA-dir_RpoA"/>
</dbReference>
<dbReference type="InterPro" id="IPR036603">
    <property type="entry name" value="RBP11-like"/>
</dbReference>
<dbReference type="InterPro" id="IPR011260">
    <property type="entry name" value="RNAP_asu_C"/>
</dbReference>
<dbReference type="InterPro" id="IPR036643">
    <property type="entry name" value="RNApol_insert_sf"/>
</dbReference>
<dbReference type="NCBIfam" id="NF003513">
    <property type="entry name" value="PRK05182.1-2"/>
    <property type="match status" value="1"/>
</dbReference>
<dbReference type="NCBIfam" id="NF003519">
    <property type="entry name" value="PRK05182.2-5"/>
    <property type="match status" value="1"/>
</dbReference>
<dbReference type="NCBIfam" id="TIGR02027">
    <property type="entry name" value="rpoA"/>
    <property type="match status" value="1"/>
</dbReference>
<dbReference type="Pfam" id="PF01000">
    <property type="entry name" value="RNA_pol_A_bac"/>
    <property type="match status" value="1"/>
</dbReference>
<dbReference type="Pfam" id="PF03118">
    <property type="entry name" value="RNA_pol_A_CTD"/>
    <property type="match status" value="1"/>
</dbReference>
<dbReference type="Pfam" id="PF01193">
    <property type="entry name" value="RNA_pol_L"/>
    <property type="match status" value="1"/>
</dbReference>
<dbReference type="SMART" id="SM00662">
    <property type="entry name" value="RPOLD"/>
    <property type="match status" value="1"/>
</dbReference>
<dbReference type="SUPFAM" id="SSF47789">
    <property type="entry name" value="C-terminal domain of RNA polymerase alpha subunit"/>
    <property type="match status" value="1"/>
</dbReference>
<dbReference type="SUPFAM" id="SSF56553">
    <property type="entry name" value="Insert subdomain of RNA polymerase alpha subunit"/>
    <property type="match status" value="1"/>
</dbReference>
<dbReference type="SUPFAM" id="SSF55257">
    <property type="entry name" value="RBP11-like subunits of RNA polymerase"/>
    <property type="match status" value="1"/>
</dbReference>
<evidence type="ECO:0000255" key="1">
    <source>
        <dbReference type="HAMAP-Rule" id="MF_00059"/>
    </source>
</evidence>
<feature type="chain" id="PRO_0000175281" description="DNA-directed RNA polymerase subunit alpha">
    <location>
        <begin position="1"/>
        <end position="331"/>
    </location>
</feature>
<feature type="region of interest" description="Alpha N-terminal domain (alpha-NTD)" evidence="1">
    <location>
        <begin position="1"/>
        <end position="237"/>
    </location>
</feature>
<feature type="region of interest" description="Alpha C-terminal domain (alpha-CTD)" evidence="1">
    <location>
        <begin position="251"/>
        <end position="331"/>
    </location>
</feature>
<reference key="1">
    <citation type="journal article" date="2003" name="Proc. Natl. Acad. Sci. U.S.A.">
        <title>Reductive genome evolution in Buchnera aphidicola.</title>
        <authorList>
            <person name="van Ham R.C.H.J."/>
            <person name="Kamerbeek J."/>
            <person name="Palacios C."/>
            <person name="Rausell C."/>
            <person name="Abascal F."/>
            <person name="Bastolla U."/>
            <person name="Fernandez J.M."/>
            <person name="Jimenez L."/>
            <person name="Postigo M."/>
            <person name="Silva F.J."/>
            <person name="Tamames J."/>
            <person name="Viguera E."/>
            <person name="Latorre A."/>
            <person name="Valencia A."/>
            <person name="Moran F."/>
            <person name="Moya A."/>
        </authorList>
    </citation>
    <scope>NUCLEOTIDE SEQUENCE [LARGE SCALE GENOMIC DNA]</scope>
    <source>
        <strain>Bp</strain>
    </source>
</reference>
<organism>
    <name type="scientific">Buchnera aphidicola subsp. Baizongia pistaciae (strain Bp)</name>
    <dbReference type="NCBI Taxonomy" id="224915"/>
    <lineage>
        <taxon>Bacteria</taxon>
        <taxon>Pseudomonadati</taxon>
        <taxon>Pseudomonadota</taxon>
        <taxon>Gammaproteobacteria</taxon>
        <taxon>Enterobacterales</taxon>
        <taxon>Erwiniaceae</taxon>
        <taxon>Buchnera</taxon>
    </lineage>
</organism>
<accession>P59455</accession>
<gene>
    <name evidence="1" type="primary">rpoA</name>
    <name type="ordered locus">bbp_442</name>
</gene>
<name>RPOA_BUCBP</name>
<proteinExistence type="inferred from homology"/>
<keyword id="KW-0240">DNA-directed RNA polymerase</keyword>
<keyword id="KW-0548">Nucleotidyltransferase</keyword>
<keyword id="KW-1185">Reference proteome</keyword>
<keyword id="KW-0804">Transcription</keyword>
<keyword id="KW-0808">Transferase</keyword>
<protein>
    <recommendedName>
        <fullName evidence="1">DNA-directed RNA polymerase subunit alpha</fullName>
        <shortName evidence="1">RNAP subunit alpha</shortName>
        <ecNumber evidence="1">2.7.7.6</ecNumber>
    </recommendedName>
    <alternativeName>
        <fullName evidence="1">RNA polymerase subunit alpha</fullName>
    </alternativeName>
    <alternativeName>
        <fullName evidence="1">Transcriptase subunit alpha</fullName>
    </alternativeName>
</protein>